<protein>
    <recommendedName>
        <fullName>Uncharacterized protein R587</fullName>
    </recommendedName>
</protein>
<proteinExistence type="predicted"/>
<name>YR587_MIMIV</name>
<organism>
    <name type="scientific">Acanthamoeba polyphaga mimivirus</name>
    <name type="common">APMV</name>
    <dbReference type="NCBI Taxonomy" id="212035"/>
    <lineage>
        <taxon>Viruses</taxon>
        <taxon>Varidnaviria</taxon>
        <taxon>Bamfordvirae</taxon>
        <taxon>Nucleocytoviricota</taxon>
        <taxon>Megaviricetes</taxon>
        <taxon>Imitervirales</taxon>
        <taxon>Mimiviridae</taxon>
        <taxon>Megamimivirinae</taxon>
        <taxon>Mimivirus</taxon>
        <taxon>Mimivirus bradfordmassiliense</taxon>
    </lineage>
</organism>
<sequence length="190" mass="21703">MTQIIDRVTCLFPCFRNKNANYDLISQDTDNSELSIKETSETKQVRQWLDTSKGSITVEMDLLVLPGQPNIKTTVGPDGWPSGPKINITFHERIISLAKMKADPKDPGTFEVYIKGKIRLYNREIFLEMANNARKHYTAAYEGGFISYKDFVAVQSYIQAGIDNEELMRQVIVSLANHKFETMFPDPSDW</sequence>
<feature type="chain" id="PRO_0000071295" description="Uncharacterized protein R587">
    <location>
        <begin position="1"/>
        <end position="190"/>
    </location>
</feature>
<organismHost>
    <name type="scientific">Acanthamoeba polyphaga</name>
    <name type="common">Amoeba</name>
    <dbReference type="NCBI Taxonomy" id="5757"/>
</organismHost>
<dbReference type="EMBL" id="AY653733">
    <property type="protein sequence ID" value="AAV50850.1"/>
    <property type="molecule type" value="Genomic_DNA"/>
</dbReference>
<dbReference type="KEGG" id="vg:9925223"/>
<dbReference type="Proteomes" id="UP000001134">
    <property type="component" value="Genome"/>
</dbReference>
<reference key="1">
    <citation type="journal article" date="2004" name="Science">
        <title>The 1.2-megabase genome sequence of Mimivirus.</title>
        <authorList>
            <person name="Raoult D."/>
            <person name="Audic S."/>
            <person name="Robert C."/>
            <person name="Abergel C."/>
            <person name="Renesto P."/>
            <person name="Ogata H."/>
            <person name="La Scola B."/>
            <person name="Susan M."/>
            <person name="Claverie J.-M."/>
        </authorList>
    </citation>
    <scope>NUCLEOTIDE SEQUENCE [LARGE SCALE GENOMIC DNA]</scope>
    <source>
        <strain>Rowbotham-Bradford</strain>
    </source>
</reference>
<gene>
    <name type="ordered locus">MIMI_R587</name>
</gene>
<keyword id="KW-1185">Reference proteome</keyword>
<accession>Q5UP51</accession>